<keyword id="KW-0238">DNA-binding</keyword>
<keyword id="KW-0678">Repressor</keyword>
<keyword id="KW-0804">Transcription</keyword>
<keyword id="KW-0805">Transcription regulation</keyword>
<gene>
    <name evidence="2" type="primary">betI</name>
    <name type="ordered locus">ECSE_0334</name>
</gene>
<accession>B6I093</accession>
<organism>
    <name type="scientific">Escherichia coli (strain SE11)</name>
    <dbReference type="NCBI Taxonomy" id="409438"/>
    <lineage>
        <taxon>Bacteria</taxon>
        <taxon>Pseudomonadati</taxon>
        <taxon>Pseudomonadota</taxon>
        <taxon>Gammaproteobacteria</taxon>
        <taxon>Enterobacterales</taxon>
        <taxon>Enterobacteriaceae</taxon>
        <taxon>Escherichia</taxon>
    </lineage>
</organism>
<reference key="1">
    <citation type="journal article" date="2008" name="DNA Res.">
        <title>Complete genome sequence and comparative analysis of the wild-type commensal Escherichia coli strain SE11 isolated from a healthy adult.</title>
        <authorList>
            <person name="Oshima K."/>
            <person name="Toh H."/>
            <person name="Ogura Y."/>
            <person name="Sasamoto H."/>
            <person name="Morita H."/>
            <person name="Park S.-H."/>
            <person name="Ooka T."/>
            <person name="Iyoda S."/>
            <person name="Taylor T.D."/>
            <person name="Hayashi T."/>
            <person name="Itoh K."/>
            <person name="Hattori M."/>
        </authorList>
    </citation>
    <scope>NUCLEOTIDE SEQUENCE [LARGE SCALE GENOMIC DNA]</scope>
    <source>
        <strain>SE11</strain>
    </source>
</reference>
<name>BETI_ECOSE</name>
<evidence type="ECO:0000250" key="1"/>
<evidence type="ECO:0000255" key="2">
    <source>
        <dbReference type="HAMAP-Rule" id="MF_00768"/>
    </source>
</evidence>
<comment type="function">
    <text evidence="1">Repressor involved in the biosynthesis of the osmoprotectant glycine betaine. It represses transcription of the choline transporter BetT and the genes of BetAB involved in the synthesis of glycine betaine (By similarity).</text>
</comment>
<comment type="pathway">
    <text>Amine and polyamine biosynthesis; betaine biosynthesis via choline pathway [regulation].</text>
</comment>
<dbReference type="EMBL" id="AP009240">
    <property type="protein sequence ID" value="BAG75858.1"/>
    <property type="molecule type" value="Genomic_DNA"/>
</dbReference>
<dbReference type="RefSeq" id="WP_001351501.1">
    <property type="nucleotide sequence ID" value="NC_011415.1"/>
</dbReference>
<dbReference type="SMR" id="B6I093"/>
<dbReference type="KEGG" id="ecy:ECSE_0334"/>
<dbReference type="HOGENOM" id="CLU_069356_15_4_6"/>
<dbReference type="UniPathway" id="UPA00529"/>
<dbReference type="Proteomes" id="UP000008199">
    <property type="component" value="Chromosome"/>
</dbReference>
<dbReference type="GO" id="GO:0003700">
    <property type="term" value="F:DNA-binding transcription factor activity"/>
    <property type="evidence" value="ECO:0007669"/>
    <property type="project" value="UniProtKB-UniRule"/>
</dbReference>
<dbReference type="GO" id="GO:0000976">
    <property type="term" value="F:transcription cis-regulatory region binding"/>
    <property type="evidence" value="ECO:0007669"/>
    <property type="project" value="TreeGrafter"/>
</dbReference>
<dbReference type="GO" id="GO:0019285">
    <property type="term" value="P:glycine betaine biosynthetic process from choline"/>
    <property type="evidence" value="ECO:0007669"/>
    <property type="project" value="UniProtKB-UniRule"/>
</dbReference>
<dbReference type="GO" id="GO:0045892">
    <property type="term" value="P:negative regulation of DNA-templated transcription"/>
    <property type="evidence" value="ECO:0007669"/>
    <property type="project" value="UniProtKB-UniRule"/>
</dbReference>
<dbReference type="FunFam" id="1.10.357.10:FF:000009">
    <property type="entry name" value="HTH-type transcriptional regulator BetI"/>
    <property type="match status" value="1"/>
</dbReference>
<dbReference type="Gene3D" id="1.10.357.10">
    <property type="entry name" value="Tetracycline Repressor, domain 2"/>
    <property type="match status" value="1"/>
</dbReference>
<dbReference type="HAMAP" id="MF_00768">
    <property type="entry name" value="HTH_type_BetI"/>
    <property type="match status" value="1"/>
</dbReference>
<dbReference type="InterPro" id="IPR039538">
    <property type="entry name" value="BetI_C"/>
</dbReference>
<dbReference type="InterPro" id="IPR023772">
    <property type="entry name" value="DNA-bd_HTH_TetR-type_CS"/>
</dbReference>
<dbReference type="InterPro" id="IPR009057">
    <property type="entry name" value="Homeodomain-like_sf"/>
</dbReference>
<dbReference type="InterPro" id="IPR050109">
    <property type="entry name" value="HTH-type_TetR-like_transc_reg"/>
</dbReference>
<dbReference type="InterPro" id="IPR001647">
    <property type="entry name" value="HTH_TetR"/>
</dbReference>
<dbReference type="InterPro" id="IPR036271">
    <property type="entry name" value="Tet_transcr_reg_TetR-rel_C_sf"/>
</dbReference>
<dbReference type="InterPro" id="IPR017757">
    <property type="entry name" value="Tscrpt_rep_BetI"/>
</dbReference>
<dbReference type="NCBIfam" id="TIGR03384">
    <property type="entry name" value="betaine_BetI"/>
    <property type="match status" value="1"/>
</dbReference>
<dbReference type="NCBIfam" id="NF001978">
    <property type="entry name" value="PRK00767.1"/>
    <property type="match status" value="1"/>
</dbReference>
<dbReference type="PANTHER" id="PTHR30055:SF234">
    <property type="entry name" value="HTH-TYPE TRANSCRIPTIONAL REGULATOR BETI"/>
    <property type="match status" value="1"/>
</dbReference>
<dbReference type="PANTHER" id="PTHR30055">
    <property type="entry name" value="HTH-TYPE TRANSCRIPTIONAL REGULATOR RUTR"/>
    <property type="match status" value="1"/>
</dbReference>
<dbReference type="Pfam" id="PF13977">
    <property type="entry name" value="TetR_C_6"/>
    <property type="match status" value="1"/>
</dbReference>
<dbReference type="Pfam" id="PF00440">
    <property type="entry name" value="TetR_N"/>
    <property type="match status" value="1"/>
</dbReference>
<dbReference type="PRINTS" id="PR00455">
    <property type="entry name" value="HTHTETR"/>
</dbReference>
<dbReference type="SUPFAM" id="SSF46689">
    <property type="entry name" value="Homeodomain-like"/>
    <property type="match status" value="1"/>
</dbReference>
<dbReference type="SUPFAM" id="SSF48498">
    <property type="entry name" value="Tetracyclin repressor-like, C-terminal domain"/>
    <property type="match status" value="1"/>
</dbReference>
<dbReference type="PROSITE" id="PS01081">
    <property type="entry name" value="HTH_TETR_1"/>
    <property type="match status" value="1"/>
</dbReference>
<dbReference type="PROSITE" id="PS50977">
    <property type="entry name" value="HTH_TETR_2"/>
    <property type="match status" value="1"/>
</dbReference>
<feature type="chain" id="PRO_1000190483" description="HTH-type transcriptional regulator BetI">
    <location>
        <begin position="1"/>
        <end position="195"/>
    </location>
</feature>
<feature type="domain" description="HTH tetR-type" evidence="2">
    <location>
        <begin position="8"/>
        <end position="68"/>
    </location>
</feature>
<feature type="DNA-binding region" description="H-T-H motif" evidence="2">
    <location>
        <begin position="31"/>
        <end position="50"/>
    </location>
</feature>
<protein>
    <recommendedName>
        <fullName evidence="2">HTH-type transcriptional regulator BetI</fullName>
    </recommendedName>
</protein>
<sequence length="195" mass="21791">MPKLGMQSIRRRQLIDATLEAINEVGMHDATIAQIARRAGVSTGIISHYFRDKNGLLEATMRDITSQLRDAVLNRLHALPQGSAEQRLQAIVGGNFDETQVSSAAMKAWLAFWASSMHQPMLYRLQQVSSRRLLSNLVSEFRRELPREQAQEAGYGLAALIDGLWLRAALSGKPLDKPLAHSLTRHFITQHLPTD</sequence>
<proteinExistence type="inferred from homology"/>